<name>TSI2_PSEAE</name>
<evidence type="ECO:0000269" key="1">
    <source>
    </source>
</evidence>
<evidence type="ECO:0000269" key="2">
    <source>
    </source>
</evidence>
<evidence type="ECO:0000269" key="3">
    <source>
    </source>
</evidence>
<evidence type="ECO:0000303" key="4">
    <source>
    </source>
</evidence>
<evidence type="ECO:0007744" key="5">
    <source>
        <dbReference type="PDB" id="3RQ9"/>
    </source>
</evidence>
<evidence type="ECO:0007744" key="6">
    <source>
        <dbReference type="PDB" id="3STQ"/>
    </source>
</evidence>
<evidence type="ECO:0007744" key="7">
    <source>
        <dbReference type="PDB" id="4C18"/>
    </source>
</evidence>
<evidence type="ECO:0007744" key="8">
    <source>
        <dbReference type="PDB" id="5AKO"/>
    </source>
</evidence>
<evidence type="ECO:0007829" key="9">
    <source>
        <dbReference type="PDB" id="3RQ9"/>
    </source>
</evidence>
<evidence type="ECO:0007829" key="10">
    <source>
        <dbReference type="PDB" id="3STQ"/>
    </source>
</evidence>
<evidence type="ECO:0007829" key="11">
    <source>
        <dbReference type="PDB" id="3VPV"/>
    </source>
</evidence>
<evidence type="ECO:0007829" key="12">
    <source>
        <dbReference type="PDB" id="5AKO"/>
    </source>
</evidence>
<accession>Q9I0D9</accession>
<comment type="function">
    <text evidence="1 2 3">Immunity protein that plays a role in preventing early activation of toxin Tse2. Binds to a large surface of Tse2 and thereby occludes the active site to specifically inhibits Tse2.</text>
</comment>
<comment type="subunit">
    <text evidence="1 2 3">Forms a heterotetramer with Tse2 consisting of two Tse2 dimers and two Tsi2 dimers. Formation of the complex inactivates Tse2 enzymatic activity.</text>
</comment>
<comment type="disruption phenotype">
    <text evidence="2">Deletion of Tsi2 is lethal in the presence of Tse2.</text>
</comment>
<organism>
    <name type="scientific">Pseudomonas aeruginosa (strain ATCC 15692 / DSM 22644 / CIP 104116 / JCM 14847 / LMG 12228 / 1C / PRS 101 / PAO1)</name>
    <dbReference type="NCBI Taxonomy" id="208964"/>
    <lineage>
        <taxon>Bacteria</taxon>
        <taxon>Pseudomonadati</taxon>
        <taxon>Pseudomonadota</taxon>
        <taxon>Gammaproteobacteria</taxon>
        <taxon>Pseudomonadales</taxon>
        <taxon>Pseudomonadaceae</taxon>
        <taxon>Pseudomonas</taxon>
    </lineage>
</organism>
<gene>
    <name evidence="4" type="primary">tsi2</name>
    <name type="ordered locus">PA2703</name>
</gene>
<keyword id="KW-0002">3D-structure</keyword>
<keyword id="KW-1015">Disulfide bond</keyword>
<keyword id="KW-1185">Reference proteome</keyword>
<dbReference type="EMBL" id="AE004091">
    <property type="protein sequence ID" value="AAG06091.1"/>
    <property type="molecule type" value="Genomic_DNA"/>
</dbReference>
<dbReference type="PIR" id="C83308">
    <property type="entry name" value="C83308"/>
</dbReference>
<dbReference type="RefSeq" id="NP_251393.1">
    <property type="nucleotide sequence ID" value="NC_002516.2"/>
</dbReference>
<dbReference type="RefSeq" id="WP_003114383.1">
    <property type="nucleotide sequence ID" value="NZ_QZGE01000011.1"/>
</dbReference>
<dbReference type="PDB" id="3RQ9">
    <property type="method" value="X-ray"/>
    <property type="resolution" value="1.00 A"/>
    <property type="chains" value="A/B=1-77"/>
</dbReference>
<dbReference type="PDB" id="3STQ">
    <property type="method" value="X-ray"/>
    <property type="resolution" value="2.28 A"/>
    <property type="chains" value="A/B/C/D/E/F=1-77"/>
</dbReference>
<dbReference type="PDB" id="3VPV">
    <property type="method" value="X-ray"/>
    <property type="resolution" value="1.80 A"/>
    <property type="chains" value="A/B=1-77"/>
</dbReference>
<dbReference type="PDB" id="4C18">
    <property type="method" value="X-ray"/>
    <property type="resolution" value="1.49 A"/>
    <property type="chains" value="A/B=1-77"/>
</dbReference>
<dbReference type="PDB" id="5AKO">
    <property type="method" value="X-ray"/>
    <property type="resolution" value="2.40 A"/>
    <property type="chains" value="A/B=1-77"/>
</dbReference>
<dbReference type="PDBsum" id="3RQ9"/>
<dbReference type="PDBsum" id="3STQ"/>
<dbReference type="PDBsum" id="3VPV"/>
<dbReference type="PDBsum" id="4C18"/>
<dbReference type="PDBsum" id="5AKO"/>
<dbReference type="SMR" id="Q9I0D9"/>
<dbReference type="DIP" id="DIP-61910N"/>
<dbReference type="IntAct" id="Q9I0D9">
    <property type="interactions" value="1"/>
</dbReference>
<dbReference type="STRING" id="208964.PA2703"/>
<dbReference type="PaxDb" id="208964-PA2703"/>
<dbReference type="GeneID" id="880324"/>
<dbReference type="KEGG" id="pae:PA2703"/>
<dbReference type="PATRIC" id="fig|208964.12.peg.2829"/>
<dbReference type="PseudoCAP" id="PA2703"/>
<dbReference type="HOGENOM" id="CLU_2635258_0_0_6"/>
<dbReference type="InParanoid" id="Q9I0D9"/>
<dbReference type="OrthoDB" id="9936438at2"/>
<dbReference type="BioCyc" id="PAER208964:G1FZ6-2743-MONOMER"/>
<dbReference type="EvolutionaryTrace" id="Q9I0D9"/>
<dbReference type="Proteomes" id="UP000002438">
    <property type="component" value="Chromosome"/>
</dbReference>
<dbReference type="CDD" id="cd11690">
    <property type="entry name" value="Tsi2_like"/>
    <property type="match status" value="1"/>
</dbReference>
<dbReference type="Gene3D" id="1.10.287.2500">
    <property type="match status" value="1"/>
</dbReference>
<dbReference type="InterPro" id="IPR049070">
    <property type="entry name" value="T6SS_Tsi2-like"/>
</dbReference>
<dbReference type="InterPro" id="IPR053756">
    <property type="entry name" value="Toxin_immunity_effector"/>
</dbReference>
<dbReference type="InterPro" id="IPR033783">
    <property type="entry name" value="Tsi2"/>
</dbReference>
<dbReference type="Pfam" id="PF21643">
    <property type="entry name" value="T6SS_Tsi2-like"/>
    <property type="match status" value="1"/>
</dbReference>
<reference key="1">
    <citation type="journal article" date="2000" name="Nature">
        <title>Complete genome sequence of Pseudomonas aeruginosa PAO1, an opportunistic pathogen.</title>
        <authorList>
            <person name="Stover C.K."/>
            <person name="Pham X.-Q.T."/>
            <person name="Erwin A.L."/>
            <person name="Mizoguchi S.D."/>
            <person name="Warrener P."/>
            <person name="Hickey M.J."/>
            <person name="Brinkman F.S.L."/>
            <person name="Hufnagle W.O."/>
            <person name="Kowalik D.J."/>
            <person name="Lagrou M."/>
            <person name="Garber R.L."/>
            <person name="Goltry L."/>
            <person name="Tolentino E."/>
            <person name="Westbrock-Wadman S."/>
            <person name="Yuan Y."/>
            <person name="Brody L.L."/>
            <person name="Coulter S.N."/>
            <person name="Folger K.R."/>
            <person name="Kas A."/>
            <person name="Larbig K."/>
            <person name="Lim R.M."/>
            <person name="Smith K.A."/>
            <person name="Spencer D.H."/>
            <person name="Wong G.K.-S."/>
            <person name="Wu Z."/>
            <person name="Paulsen I.T."/>
            <person name="Reizer J."/>
            <person name="Saier M.H. Jr."/>
            <person name="Hancock R.E.W."/>
            <person name="Lory S."/>
            <person name="Olson M.V."/>
        </authorList>
    </citation>
    <scope>NUCLEOTIDE SEQUENCE [LARGE SCALE GENOMIC DNA]</scope>
    <source>
        <strain>ATCC 15692 / DSM 22644 / CIP 104116 / JCM 14847 / LMG 12228 / 1C / PRS 101 / PAO1</strain>
    </source>
</reference>
<reference evidence="6" key="2">
    <citation type="journal article" date="2012" name="J. Mol. Biol.">
        <title>Crystal structure of Pseudomonas aeruginosa Tsi2 reveals a stably folded superhelical antitoxin.</title>
        <authorList>
            <person name="Zou T."/>
            <person name="Yao X."/>
            <person name="Qin B."/>
            <person name="Zhang M."/>
            <person name="Cai L."/>
            <person name="Shang W."/>
            <person name="Svergun D.I."/>
            <person name="Wang M."/>
            <person name="Cui S."/>
            <person name="Jin Q."/>
        </authorList>
    </citation>
    <scope>X-RAY CRYSTALLOGRAPHY (2.28 ANGSTROMS)</scope>
    <scope>SUBUNIT</scope>
    <scope>FUNCTION</scope>
</reference>
<reference evidence="5" key="3">
    <citation type="journal article" date="2012" name="PLoS Pathog.">
        <title>Structural basis for type VI secretion effector recognition by a cognate immunity protein.</title>
        <authorList>
            <person name="Li M."/>
            <person name="Le Trong I."/>
            <person name="Carl M.A."/>
            <person name="Larson E.T."/>
            <person name="Chou S."/>
            <person name="De Leon J.A."/>
            <person name="Dove S.L."/>
            <person name="Stenkamp R.E."/>
            <person name="Mougous J.D."/>
        </authorList>
    </citation>
    <scope>X-RAY CRYSTALLOGRAPHY (1.00 ANGSTROMS)</scope>
    <scope>FUNCTION</scope>
    <scope>DISRUPTION PHENOTYPE</scope>
    <scope>INTERACTION WITH TSE2</scope>
</reference>
<reference evidence="8" key="4">
    <citation type="journal article" date="2016" name="Structure">
        <title>The Structure of the Toxin and Type Six Secretion System Substrate Tse2 in Complex with Its Immunity Protein.</title>
        <authorList>
            <person name="Robb C.S."/>
            <person name="Robb M."/>
            <person name="Nano F.E."/>
            <person name="Boraston A.B."/>
        </authorList>
    </citation>
    <scope>X-RAY CRYSTALLOGRAPHY (2.40 ANGSTROMS)</scope>
    <scope>FUNCTION</scope>
    <scope>INTERACTION WITH TSE2</scope>
</reference>
<proteinExistence type="evidence at protein level"/>
<protein>
    <recommendedName>
        <fullName evidence="4">Immune protein Tsi2</fullName>
    </recommendedName>
    <alternativeName>
        <fullName>Anti-toxin protein Tsi2</fullName>
    </alternativeName>
</protein>
<sequence>MNLKPQTLMVAIQCVAARTRELDAQLQNDDPQNAAELEQLLVGYDLAADDLKNAYEQALGQYSGLPPYDRLIEEPAS</sequence>
<feature type="chain" id="PRO_0000449042" description="Immune protein Tsi2">
    <location>
        <begin position="1"/>
        <end position="77"/>
    </location>
</feature>
<feature type="disulfide bond" description="Interchain" evidence="7">
    <location>
        <position position="14"/>
    </location>
</feature>
<feature type="strand" evidence="10">
    <location>
        <begin position="1"/>
        <end position="3"/>
    </location>
</feature>
<feature type="helix" evidence="9">
    <location>
        <begin position="5"/>
        <end position="25"/>
    </location>
</feature>
<feature type="turn" evidence="9">
    <location>
        <begin position="26"/>
        <end position="28"/>
    </location>
</feature>
<feature type="helix" evidence="9">
    <location>
        <begin position="31"/>
        <end position="61"/>
    </location>
</feature>
<feature type="strand" evidence="12">
    <location>
        <begin position="62"/>
        <end position="64"/>
    </location>
</feature>
<feature type="helix" evidence="9">
    <location>
        <begin position="68"/>
        <end position="71"/>
    </location>
</feature>
<feature type="helix" evidence="11">
    <location>
        <begin position="75"/>
        <end position="77"/>
    </location>
</feature>